<sequence length="369" mass="42578">MATLDVNPELYQAQLADKIARLKAMFVDYSMPELEVFESPVANYRMRAEFRIWHEGDDMYYIMFNQETREKYRVDQFPAASRLINDLMPLLMDAMKGSPILRHKLFQVDFLSTLSGEILVSLLYHRQLSEEWITAAQALKQRLNDEGFNLNLIGRARKMKVVLDRDYVVENLQVNGQPYVYKQVENSFTQPNAKVAEKMLEWAVDCTQESKGDLLELYCGNGNFSLALAQNFERVLATELAKPSVEAAQFNIAANQIGNVQIIRMSAEEFTQAMEGKREFNRLKDAGVDLQSYRCNTIFVDPPRSGMDIDTCKMVQGYERILYISCNPETLQENLQVLGETHQVVRFALFDQFPYTHHMEAGVMLERKK</sequence>
<feature type="chain" id="PRO_0000161880" description="tRNA/tmRNA (uracil-C(5))-methyltransferase">
    <location>
        <begin position="1"/>
        <end position="369"/>
    </location>
</feature>
<feature type="active site" description="Nucleophile" evidence="1">
    <location>
        <position position="326"/>
    </location>
</feature>
<feature type="active site" description="Proton acceptor" evidence="1">
    <location>
        <position position="360"/>
    </location>
</feature>
<feature type="binding site" evidence="1">
    <location>
        <position position="190"/>
    </location>
    <ligand>
        <name>S-adenosyl-L-methionine</name>
        <dbReference type="ChEBI" id="CHEBI:59789"/>
    </ligand>
</feature>
<feature type="binding site" evidence="1">
    <location>
        <position position="218"/>
    </location>
    <ligand>
        <name>S-adenosyl-L-methionine</name>
        <dbReference type="ChEBI" id="CHEBI:59789"/>
    </ligand>
</feature>
<feature type="binding site" evidence="1">
    <location>
        <position position="223"/>
    </location>
    <ligand>
        <name>S-adenosyl-L-methionine</name>
        <dbReference type="ChEBI" id="CHEBI:59789"/>
    </ligand>
</feature>
<feature type="binding site" evidence="1">
    <location>
        <position position="239"/>
    </location>
    <ligand>
        <name>S-adenosyl-L-methionine</name>
        <dbReference type="ChEBI" id="CHEBI:59789"/>
    </ligand>
</feature>
<feature type="binding site" evidence="1">
    <location>
        <position position="301"/>
    </location>
    <ligand>
        <name>S-adenosyl-L-methionine</name>
        <dbReference type="ChEBI" id="CHEBI:59789"/>
    </ligand>
</feature>
<comment type="function">
    <text evidence="1">Dual-specificity methyltransferase that catalyzes the formation of 5-methyluridine at position 54 (m5U54) in all tRNAs, and that of position 341 (m5U341) in tmRNA (transfer-mRNA).</text>
</comment>
<comment type="catalytic activity">
    <reaction evidence="1">
        <text>uridine(54) in tRNA + S-adenosyl-L-methionine = 5-methyluridine(54) in tRNA + S-adenosyl-L-homocysteine + H(+)</text>
        <dbReference type="Rhea" id="RHEA:42712"/>
        <dbReference type="Rhea" id="RHEA-COMP:10167"/>
        <dbReference type="Rhea" id="RHEA-COMP:10193"/>
        <dbReference type="ChEBI" id="CHEBI:15378"/>
        <dbReference type="ChEBI" id="CHEBI:57856"/>
        <dbReference type="ChEBI" id="CHEBI:59789"/>
        <dbReference type="ChEBI" id="CHEBI:65315"/>
        <dbReference type="ChEBI" id="CHEBI:74447"/>
        <dbReference type="EC" id="2.1.1.35"/>
    </reaction>
</comment>
<comment type="catalytic activity">
    <reaction evidence="1">
        <text>uridine(341) in tmRNA + S-adenosyl-L-methionine = 5-methyluridine(341) in tmRNA + S-adenosyl-L-homocysteine + H(+)</text>
        <dbReference type="Rhea" id="RHEA:43612"/>
        <dbReference type="Rhea" id="RHEA-COMP:10630"/>
        <dbReference type="Rhea" id="RHEA-COMP:10631"/>
        <dbReference type="ChEBI" id="CHEBI:15378"/>
        <dbReference type="ChEBI" id="CHEBI:57856"/>
        <dbReference type="ChEBI" id="CHEBI:59789"/>
        <dbReference type="ChEBI" id="CHEBI:65315"/>
        <dbReference type="ChEBI" id="CHEBI:74447"/>
    </reaction>
</comment>
<comment type="similarity">
    <text evidence="1">Belongs to the class I-like SAM-binding methyltransferase superfamily. RNA M5U methyltransferase family. TrmA subfamily.</text>
</comment>
<evidence type="ECO:0000255" key="1">
    <source>
        <dbReference type="HAMAP-Rule" id="MF_01011"/>
    </source>
</evidence>
<accession>Q9KVJ0</accession>
<reference key="1">
    <citation type="journal article" date="2000" name="Nature">
        <title>DNA sequence of both chromosomes of the cholera pathogen Vibrio cholerae.</title>
        <authorList>
            <person name="Heidelberg J.F."/>
            <person name="Eisen J.A."/>
            <person name="Nelson W.C."/>
            <person name="Clayton R.A."/>
            <person name="Gwinn M.L."/>
            <person name="Dodson R.J."/>
            <person name="Haft D.H."/>
            <person name="Hickey E.K."/>
            <person name="Peterson J.D."/>
            <person name="Umayam L.A."/>
            <person name="Gill S.R."/>
            <person name="Nelson K.E."/>
            <person name="Read T.D."/>
            <person name="Tettelin H."/>
            <person name="Richardson D.L."/>
            <person name="Ermolaeva M.D."/>
            <person name="Vamathevan J.J."/>
            <person name="Bass S."/>
            <person name="Qin H."/>
            <person name="Dragoi I."/>
            <person name="Sellers P."/>
            <person name="McDonald L.A."/>
            <person name="Utterback T.R."/>
            <person name="Fleischmann R.D."/>
            <person name="Nierman W.C."/>
            <person name="White O."/>
            <person name="Salzberg S.L."/>
            <person name="Smith H.O."/>
            <person name="Colwell R.R."/>
            <person name="Mekalanos J.J."/>
            <person name="Venter J.C."/>
            <person name="Fraser C.M."/>
        </authorList>
    </citation>
    <scope>NUCLEOTIDE SEQUENCE [LARGE SCALE GENOMIC DNA]</scope>
    <source>
        <strain>ATCC 39315 / El Tor Inaba N16961</strain>
    </source>
</reference>
<gene>
    <name evidence="1" type="primary">trmA</name>
    <name type="ordered locus">VC_0154</name>
</gene>
<proteinExistence type="inferred from homology"/>
<keyword id="KW-0489">Methyltransferase</keyword>
<keyword id="KW-1185">Reference proteome</keyword>
<keyword id="KW-0949">S-adenosyl-L-methionine</keyword>
<keyword id="KW-0808">Transferase</keyword>
<keyword id="KW-0819">tRNA processing</keyword>
<protein>
    <recommendedName>
        <fullName evidence="1">tRNA/tmRNA (uracil-C(5))-methyltransferase</fullName>
        <ecNumber evidence="1">2.1.1.-</ecNumber>
        <ecNumber evidence="1">2.1.1.35</ecNumber>
    </recommendedName>
    <alternativeName>
        <fullName evidence="1">tRNA (uracil(54)-C(5))-methyltransferase</fullName>
    </alternativeName>
    <alternativeName>
        <fullName evidence="1">tRNA(m5U54)-methyltransferase</fullName>
        <shortName evidence="1">RUMT</shortName>
    </alternativeName>
    <alternativeName>
        <fullName evidence="1">tmRNA (uracil(341)-C(5))-methyltransferase</fullName>
    </alternativeName>
</protein>
<name>TRMA_VIBCH</name>
<dbReference type="EC" id="2.1.1.-" evidence="1"/>
<dbReference type="EC" id="2.1.1.35" evidence="1"/>
<dbReference type="EMBL" id="AE003852">
    <property type="protein sequence ID" value="AAF93331.1"/>
    <property type="molecule type" value="Genomic_DNA"/>
</dbReference>
<dbReference type="PIR" id="H82357">
    <property type="entry name" value="H82357"/>
</dbReference>
<dbReference type="RefSeq" id="NP_229812.1">
    <property type="nucleotide sequence ID" value="NC_002505.1"/>
</dbReference>
<dbReference type="RefSeq" id="WP_000212218.1">
    <property type="nucleotide sequence ID" value="NZ_LT906614.1"/>
</dbReference>
<dbReference type="SMR" id="Q9KVJ0"/>
<dbReference type="STRING" id="243277.VC_0154"/>
<dbReference type="DNASU" id="2612955"/>
<dbReference type="EnsemblBacteria" id="AAF93331">
    <property type="protein sequence ID" value="AAF93331"/>
    <property type="gene ID" value="VC_0154"/>
</dbReference>
<dbReference type="KEGG" id="vch:VC_0154"/>
<dbReference type="PATRIC" id="fig|243277.26.peg.142"/>
<dbReference type="eggNOG" id="COG2265">
    <property type="taxonomic scope" value="Bacteria"/>
</dbReference>
<dbReference type="HOGENOM" id="CLU_043022_0_0_6"/>
<dbReference type="Proteomes" id="UP000000584">
    <property type="component" value="Chromosome 1"/>
</dbReference>
<dbReference type="GO" id="GO:0005829">
    <property type="term" value="C:cytosol"/>
    <property type="evidence" value="ECO:0000318"/>
    <property type="project" value="GO_Central"/>
</dbReference>
<dbReference type="GO" id="GO:0019843">
    <property type="term" value="F:rRNA binding"/>
    <property type="evidence" value="ECO:0000318"/>
    <property type="project" value="GO_Central"/>
</dbReference>
<dbReference type="GO" id="GO:0030697">
    <property type="term" value="F:tRNA (uracil(54)-C5)-methyltransferase activity, S-adenosyl methionine-dependent"/>
    <property type="evidence" value="ECO:0000318"/>
    <property type="project" value="GO_Central"/>
</dbReference>
<dbReference type="GO" id="GO:0000049">
    <property type="term" value="F:tRNA binding"/>
    <property type="evidence" value="ECO:0000318"/>
    <property type="project" value="GO_Central"/>
</dbReference>
<dbReference type="GO" id="GO:0030488">
    <property type="term" value="P:tRNA methylation"/>
    <property type="evidence" value="ECO:0007669"/>
    <property type="project" value="UniProtKB-UniRule"/>
</dbReference>
<dbReference type="CDD" id="cd02440">
    <property type="entry name" value="AdoMet_MTases"/>
    <property type="match status" value="1"/>
</dbReference>
<dbReference type="FunFam" id="2.40.50.1070:FF:000001">
    <property type="entry name" value="tRNA/tmRNA (uracil-C(5))-methyltransferase"/>
    <property type="match status" value="1"/>
</dbReference>
<dbReference type="FunFam" id="3.40.50.150:FF:000012">
    <property type="entry name" value="tRNA/tmRNA (uracil-C(5))-methyltransferase"/>
    <property type="match status" value="1"/>
</dbReference>
<dbReference type="Gene3D" id="2.40.50.1070">
    <property type="match status" value="1"/>
</dbReference>
<dbReference type="Gene3D" id="3.40.50.150">
    <property type="entry name" value="Vaccinia Virus protein VP39"/>
    <property type="match status" value="1"/>
</dbReference>
<dbReference type="HAMAP" id="MF_01011">
    <property type="entry name" value="RNA_methyltr_TrmA"/>
    <property type="match status" value="1"/>
</dbReference>
<dbReference type="InterPro" id="IPR030390">
    <property type="entry name" value="MeTrfase_TrmA_AS"/>
</dbReference>
<dbReference type="InterPro" id="IPR030391">
    <property type="entry name" value="MeTrfase_TrmA_CS"/>
</dbReference>
<dbReference type="InterPro" id="IPR029063">
    <property type="entry name" value="SAM-dependent_MTases_sf"/>
</dbReference>
<dbReference type="InterPro" id="IPR011869">
    <property type="entry name" value="TrmA_MeTrfase"/>
</dbReference>
<dbReference type="InterPro" id="IPR010280">
    <property type="entry name" value="U5_MeTrfase_fam"/>
</dbReference>
<dbReference type="NCBIfam" id="TIGR02143">
    <property type="entry name" value="trmA_only"/>
    <property type="match status" value="1"/>
</dbReference>
<dbReference type="PANTHER" id="PTHR47790">
    <property type="entry name" value="TRNA/TMRNA (URACIL-C(5))-METHYLTRANSFERASE"/>
    <property type="match status" value="1"/>
</dbReference>
<dbReference type="PANTHER" id="PTHR47790:SF2">
    <property type="entry name" value="TRNA_TMRNA (URACIL-C(5))-METHYLTRANSFERASE"/>
    <property type="match status" value="1"/>
</dbReference>
<dbReference type="Pfam" id="PF05958">
    <property type="entry name" value="tRNA_U5-meth_tr"/>
    <property type="match status" value="1"/>
</dbReference>
<dbReference type="SUPFAM" id="SSF53335">
    <property type="entry name" value="S-adenosyl-L-methionine-dependent methyltransferases"/>
    <property type="match status" value="1"/>
</dbReference>
<dbReference type="PROSITE" id="PS51687">
    <property type="entry name" value="SAM_MT_RNA_M5U"/>
    <property type="match status" value="1"/>
</dbReference>
<dbReference type="PROSITE" id="PS01230">
    <property type="entry name" value="TRMA_1"/>
    <property type="match status" value="1"/>
</dbReference>
<dbReference type="PROSITE" id="PS01231">
    <property type="entry name" value="TRMA_2"/>
    <property type="match status" value="1"/>
</dbReference>
<organism>
    <name type="scientific">Vibrio cholerae serotype O1 (strain ATCC 39315 / El Tor Inaba N16961)</name>
    <dbReference type="NCBI Taxonomy" id="243277"/>
    <lineage>
        <taxon>Bacteria</taxon>
        <taxon>Pseudomonadati</taxon>
        <taxon>Pseudomonadota</taxon>
        <taxon>Gammaproteobacteria</taxon>
        <taxon>Vibrionales</taxon>
        <taxon>Vibrionaceae</taxon>
        <taxon>Vibrio</taxon>
    </lineage>
</organism>